<name>STPA_ECO57</name>
<reference key="1">
    <citation type="journal article" date="2001" name="Nature">
        <title>Genome sequence of enterohaemorrhagic Escherichia coli O157:H7.</title>
        <authorList>
            <person name="Perna N.T."/>
            <person name="Plunkett G. III"/>
            <person name="Burland V."/>
            <person name="Mau B."/>
            <person name="Glasner J.D."/>
            <person name="Rose D.J."/>
            <person name="Mayhew G.F."/>
            <person name="Evans P.S."/>
            <person name="Gregor J."/>
            <person name="Kirkpatrick H.A."/>
            <person name="Posfai G."/>
            <person name="Hackett J."/>
            <person name="Klink S."/>
            <person name="Boutin A."/>
            <person name="Shao Y."/>
            <person name="Miller L."/>
            <person name="Grotbeck E.J."/>
            <person name="Davis N.W."/>
            <person name="Lim A."/>
            <person name="Dimalanta E.T."/>
            <person name="Potamousis K."/>
            <person name="Apodaca J."/>
            <person name="Anantharaman T.S."/>
            <person name="Lin J."/>
            <person name="Yen G."/>
            <person name="Schwartz D.C."/>
            <person name="Welch R.A."/>
            <person name="Blattner F.R."/>
        </authorList>
    </citation>
    <scope>NUCLEOTIDE SEQUENCE [LARGE SCALE GENOMIC DNA]</scope>
    <source>
        <strain>O157:H7 / EDL933 / ATCC 700927 / EHEC</strain>
    </source>
</reference>
<reference key="2">
    <citation type="journal article" date="2001" name="DNA Res.">
        <title>Complete genome sequence of enterohemorrhagic Escherichia coli O157:H7 and genomic comparison with a laboratory strain K-12.</title>
        <authorList>
            <person name="Hayashi T."/>
            <person name="Makino K."/>
            <person name="Ohnishi M."/>
            <person name="Kurokawa K."/>
            <person name="Ishii K."/>
            <person name="Yokoyama K."/>
            <person name="Han C.-G."/>
            <person name="Ohtsubo E."/>
            <person name="Nakayama K."/>
            <person name="Murata T."/>
            <person name="Tanaka M."/>
            <person name="Tobe T."/>
            <person name="Iida T."/>
            <person name="Takami H."/>
            <person name="Honda T."/>
            <person name="Sasakawa C."/>
            <person name="Ogasawara N."/>
            <person name="Yasunaga T."/>
            <person name="Kuhara S."/>
            <person name="Shiba T."/>
            <person name="Hattori M."/>
            <person name="Shinagawa H."/>
        </authorList>
    </citation>
    <scope>NUCLEOTIDE SEQUENCE [LARGE SCALE GENOMIC DNA]</scope>
    <source>
        <strain>O157:H7 / Sakai / RIMD 0509952 / EHEC</strain>
    </source>
</reference>
<gene>
    <name type="primary">stpA</name>
    <name type="ordered locus">Z3968</name>
    <name type="ordered locus">ECs3530</name>
</gene>
<proteinExistence type="inferred from homology"/>
<protein>
    <recommendedName>
        <fullName>DNA-binding protein StpA</fullName>
    </recommendedName>
    <alternativeName>
        <fullName>H-NS homolog StpA</fullName>
    </alternativeName>
</protein>
<dbReference type="EMBL" id="AE005174">
    <property type="protein sequence ID" value="AAG57777.1"/>
    <property type="molecule type" value="Genomic_DNA"/>
</dbReference>
<dbReference type="EMBL" id="BA000007">
    <property type="protein sequence ID" value="BAB36953.1"/>
    <property type="molecule type" value="Genomic_DNA"/>
</dbReference>
<dbReference type="PIR" id="B91070">
    <property type="entry name" value="B91070"/>
</dbReference>
<dbReference type="PIR" id="E85914">
    <property type="entry name" value="E85914"/>
</dbReference>
<dbReference type="RefSeq" id="NP_311557.1">
    <property type="nucleotide sequence ID" value="NC_002695.1"/>
</dbReference>
<dbReference type="RefSeq" id="WP_000115383.1">
    <property type="nucleotide sequence ID" value="NZ_VOAI01000003.1"/>
</dbReference>
<dbReference type="BMRB" id="P0ACG2"/>
<dbReference type="SMR" id="P0ACG2"/>
<dbReference type="STRING" id="155864.Z3968"/>
<dbReference type="GeneID" id="914754"/>
<dbReference type="GeneID" id="93779342"/>
<dbReference type="KEGG" id="ece:Z3968"/>
<dbReference type="KEGG" id="ecs:ECs_3530"/>
<dbReference type="PATRIC" id="fig|386585.9.peg.3684"/>
<dbReference type="eggNOG" id="COG2916">
    <property type="taxonomic scope" value="Bacteria"/>
</dbReference>
<dbReference type="HOGENOM" id="CLU_117503_0_0_6"/>
<dbReference type="OMA" id="NTWLELM"/>
<dbReference type="Proteomes" id="UP000000558">
    <property type="component" value="Chromosome"/>
</dbReference>
<dbReference type="Proteomes" id="UP000002519">
    <property type="component" value="Chromosome"/>
</dbReference>
<dbReference type="GO" id="GO:0005829">
    <property type="term" value="C:cytosol"/>
    <property type="evidence" value="ECO:0007669"/>
    <property type="project" value="TreeGrafter"/>
</dbReference>
<dbReference type="GO" id="GO:0009295">
    <property type="term" value="C:nucleoid"/>
    <property type="evidence" value="ECO:0007669"/>
    <property type="project" value="UniProtKB-SubCell"/>
</dbReference>
<dbReference type="GO" id="GO:0032993">
    <property type="term" value="C:protein-DNA complex"/>
    <property type="evidence" value="ECO:0007669"/>
    <property type="project" value="TreeGrafter"/>
</dbReference>
<dbReference type="GO" id="GO:0003681">
    <property type="term" value="F:bent DNA binding"/>
    <property type="evidence" value="ECO:0007669"/>
    <property type="project" value="TreeGrafter"/>
</dbReference>
<dbReference type="GO" id="GO:0001217">
    <property type="term" value="F:DNA-binding transcription repressor activity"/>
    <property type="evidence" value="ECO:0007669"/>
    <property type="project" value="TreeGrafter"/>
</dbReference>
<dbReference type="GO" id="GO:0003680">
    <property type="term" value="F:minor groove of adenine-thymine-rich DNA binding"/>
    <property type="evidence" value="ECO:0007669"/>
    <property type="project" value="TreeGrafter"/>
</dbReference>
<dbReference type="GO" id="GO:0046983">
    <property type="term" value="F:protein dimerization activity"/>
    <property type="evidence" value="ECO:0007669"/>
    <property type="project" value="InterPro"/>
</dbReference>
<dbReference type="GO" id="GO:0030527">
    <property type="term" value="F:structural constituent of chromatin"/>
    <property type="evidence" value="ECO:0007669"/>
    <property type="project" value="InterPro"/>
</dbReference>
<dbReference type="GO" id="GO:0000976">
    <property type="term" value="F:transcription cis-regulatory region binding"/>
    <property type="evidence" value="ECO:0007669"/>
    <property type="project" value="TreeGrafter"/>
</dbReference>
<dbReference type="FunFam" id="1.10.287.1050:FF:000001">
    <property type="entry name" value="DNA-binding protein"/>
    <property type="match status" value="1"/>
</dbReference>
<dbReference type="FunFam" id="4.10.430.10:FF:000001">
    <property type="entry name" value="DNA-binding protein"/>
    <property type="match status" value="1"/>
</dbReference>
<dbReference type="Gene3D" id="1.10.287.1050">
    <property type="entry name" value="H-NS histone-like proteins"/>
    <property type="match status" value="1"/>
</dbReference>
<dbReference type="Gene3D" id="4.10.430.10">
    <property type="entry name" value="Histone-like protein H-NS, C-terminal domain"/>
    <property type="match status" value="1"/>
</dbReference>
<dbReference type="InterPro" id="IPR054180">
    <property type="entry name" value="H-NS-like_N"/>
</dbReference>
<dbReference type="InterPro" id="IPR027444">
    <property type="entry name" value="H-NS_C_dom"/>
</dbReference>
<dbReference type="InterPro" id="IPR037150">
    <property type="entry name" value="H-NS_C_dom_sf"/>
</dbReference>
<dbReference type="InterPro" id="IPR001801">
    <property type="entry name" value="Histone_HNS"/>
</dbReference>
<dbReference type="InterPro" id="IPR027454">
    <property type="entry name" value="Histone_HNS_N"/>
</dbReference>
<dbReference type="NCBIfam" id="NF007656">
    <property type="entry name" value="PRK10328.1"/>
    <property type="match status" value="1"/>
</dbReference>
<dbReference type="PANTHER" id="PTHR38097">
    <property type="match status" value="1"/>
</dbReference>
<dbReference type="PANTHER" id="PTHR38097:SF2">
    <property type="entry name" value="DNA-BINDING PROTEIN STPA"/>
    <property type="match status" value="1"/>
</dbReference>
<dbReference type="Pfam" id="PF00816">
    <property type="entry name" value="Histone_HNS"/>
    <property type="match status" value="1"/>
</dbReference>
<dbReference type="Pfam" id="PF22470">
    <property type="entry name" value="Histone_HNS_N"/>
    <property type="match status" value="1"/>
</dbReference>
<dbReference type="PIRSF" id="PIRSF002096">
    <property type="entry name" value="HnS"/>
    <property type="match status" value="1"/>
</dbReference>
<dbReference type="SMART" id="SM00528">
    <property type="entry name" value="HNS"/>
    <property type="match status" value="1"/>
</dbReference>
<dbReference type="SUPFAM" id="SSF81273">
    <property type="entry name" value="H-NS histone-like proteins"/>
    <property type="match status" value="2"/>
</dbReference>
<sequence length="134" mass="15348">MSVMLQSLNNIRTLRAMAREFSIDVLEEMLEKFRVVTKERREEEEQQQRELAERQEKISTWLELMKADGINPEELLGNSSAAAPRAGKKRQPRPAKYKFTDVNGETKTWTGQGRTPKPIAQALAEGKSLDDFLI</sequence>
<accession>P0ACG2</accession>
<accession>P30017</accession>
<comment type="function">
    <text evidence="2">A DNA-binding protein that acts in a fashion similar to H-NS, repressing gene transcription. A subset of H-NS/StpA-regulated genes require auxillary proteins for repression; these auxillary proteins (Hha and other similar proteins) may also modulate oligomerization of the H-NS/StpA complex (By similarity).</text>
</comment>
<comment type="subunit">
    <text evidence="2">Forms homodimers, can interact with H-NS. May interact with Hha and/or Cnu.</text>
</comment>
<comment type="subcellular location">
    <subcellularLocation>
        <location evidence="2">Cytoplasm</location>
        <location evidence="2">Nucleoid</location>
    </subcellularLocation>
</comment>
<comment type="similarity">
    <text evidence="4">Belongs to the histone-like protein H-NS family.</text>
</comment>
<keyword id="KW-0963">Cytoplasm</keyword>
<keyword id="KW-0238">DNA-binding</keyword>
<keyword id="KW-1185">Reference proteome</keyword>
<organism>
    <name type="scientific">Escherichia coli O157:H7</name>
    <dbReference type="NCBI Taxonomy" id="83334"/>
    <lineage>
        <taxon>Bacteria</taxon>
        <taxon>Pseudomonadati</taxon>
        <taxon>Pseudomonadota</taxon>
        <taxon>Gammaproteobacteria</taxon>
        <taxon>Enterobacterales</taxon>
        <taxon>Enterobacteriaceae</taxon>
        <taxon>Escherichia</taxon>
    </lineage>
</organism>
<evidence type="ECO:0000250" key="1">
    <source>
        <dbReference type="UniProtKB" id="P0A1S2"/>
    </source>
</evidence>
<evidence type="ECO:0000250" key="2">
    <source>
        <dbReference type="UniProtKB" id="P0ACG1"/>
    </source>
</evidence>
<evidence type="ECO:0000256" key="3">
    <source>
        <dbReference type="SAM" id="MobiDB-lite"/>
    </source>
</evidence>
<evidence type="ECO:0000305" key="4"/>
<feature type="chain" id="PRO_0000168514" description="DNA-binding protein StpA">
    <location>
        <begin position="1"/>
        <end position="134"/>
    </location>
</feature>
<feature type="DNA-binding region" evidence="1">
    <location>
        <begin position="112"/>
        <end position="117"/>
    </location>
</feature>
<feature type="region of interest" description="Disordered" evidence="3">
    <location>
        <begin position="73"/>
        <end position="94"/>
    </location>
</feature>